<organism>
    <name type="scientific">Pinus thunbergii</name>
    <name type="common">Japanese black pine</name>
    <name type="synonym">Pinus thunbergiana</name>
    <dbReference type="NCBI Taxonomy" id="3350"/>
    <lineage>
        <taxon>Eukaryota</taxon>
        <taxon>Viridiplantae</taxon>
        <taxon>Streptophyta</taxon>
        <taxon>Embryophyta</taxon>
        <taxon>Tracheophyta</taxon>
        <taxon>Spermatophyta</taxon>
        <taxon>Pinopsida</taxon>
        <taxon>Pinidae</taxon>
        <taxon>Conifers I</taxon>
        <taxon>Pinales</taxon>
        <taxon>Pinaceae</taxon>
        <taxon>Pinus</taxon>
        <taxon>Pinus subgen. Pinus</taxon>
    </lineage>
</organism>
<geneLocation type="chloroplast"/>
<evidence type="ECO:0000255" key="1">
    <source>
        <dbReference type="HAMAP-Rule" id="MF_01393"/>
    </source>
</evidence>
<comment type="function">
    <text evidence="1">Key component of the proton channel; it plays a direct role in the translocation of protons across the membrane.</text>
</comment>
<comment type="subunit">
    <text evidence="1">F-type ATPases have 2 components, CF(1) - the catalytic core - and CF(0) - the membrane proton channel. CF(1) has five subunits: alpha(3), beta(3), gamma(1), delta(1), epsilon(1). CF(0) has four main subunits: a, b, b' and c.</text>
</comment>
<comment type="subcellular location">
    <subcellularLocation>
        <location evidence="1">Plastid</location>
        <location evidence="1">Chloroplast thylakoid membrane</location>
        <topology evidence="1">Multi-pass membrane protein</topology>
    </subcellularLocation>
</comment>
<comment type="similarity">
    <text evidence="1">Belongs to the ATPase A chain family.</text>
</comment>
<gene>
    <name evidence="1" type="primary">atpI</name>
</gene>
<protein>
    <recommendedName>
        <fullName evidence="1">ATP synthase subunit a, chloroplastic</fullName>
    </recommendedName>
    <alternativeName>
        <fullName evidence="1">ATP synthase F0 sector subunit a</fullName>
    </alternativeName>
    <alternativeName>
        <fullName evidence="1">F-ATPase subunit IV</fullName>
    </alternativeName>
</protein>
<proteinExistence type="inferred from homology"/>
<reference key="1">
    <citation type="journal article" date="1994" name="Proc. Natl. Acad. Sci. U.S.A.">
        <title>Loss of all ndh genes as determined by sequencing the entire chloroplast genome of the black pine Pinus thunbergii.</title>
        <authorList>
            <person name="Wakasugi T."/>
            <person name="Tsudzuki J."/>
            <person name="Ito S."/>
            <person name="Nakashima K."/>
            <person name="Tsudzuki T."/>
            <person name="Sugiura M."/>
        </authorList>
    </citation>
    <scope>NUCLEOTIDE SEQUENCE [LARGE SCALE GENOMIC DNA]</scope>
</reference>
<sequence length="248" mass="27232">MDIVRSPISTLNHIYEISGVEVGQHFYWQIGGFQVHGQVLLTSWVVIAVLLGSATIAVRDPQTIPTGGQNFVEYILEFFRDLTRTQIGEEEYGPWVPFIGTMFLFIFVSNWSGALLPWGILKLPQGELAAPTNDINTTVALALLTSVAYFYAGLTKKGLGYFGKYIQPTPILLPINILEDFTKPLSLSFRLFGNILADELVVAVLVSLVPLIVPIPVMFLGLFTSGIQALIFATLAAAYIGESMEGHH</sequence>
<accession>P41604</accession>
<keyword id="KW-0066">ATP synthesis</keyword>
<keyword id="KW-0138">CF(0)</keyword>
<keyword id="KW-0150">Chloroplast</keyword>
<keyword id="KW-0375">Hydrogen ion transport</keyword>
<keyword id="KW-0406">Ion transport</keyword>
<keyword id="KW-0472">Membrane</keyword>
<keyword id="KW-0934">Plastid</keyword>
<keyword id="KW-0793">Thylakoid</keyword>
<keyword id="KW-0812">Transmembrane</keyword>
<keyword id="KW-1133">Transmembrane helix</keyword>
<keyword id="KW-0813">Transport</keyword>
<name>ATPI_PINTH</name>
<dbReference type="EMBL" id="D17510">
    <property type="protein sequence ID" value="BAA04322.1"/>
    <property type="molecule type" value="Genomic_DNA"/>
</dbReference>
<dbReference type="PIR" id="T07443">
    <property type="entry name" value="T07443"/>
</dbReference>
<dbReference type="RefSeq" id="NP_042364.1">
    <property type="nucleotide sequence ID" value="NC_001631.1"/>
</dbReference>
<dbReference type="SMR" id="P41604"/>
<dbReference type="GeneID" id="809084"/>
<dbReference type="GO" id="GO:0009535">
    <property type="term" value="C:chloroplast thylakoid membrane"/>
    <property type="evidence" value="ECO:0007669"/>
    <property type="project" value="UniProtKB-SubCell"/>
</dbReference>
<dbReference type="GO" id="GO:0005886">
    <property type="term" value="C:plasma membrane"/>
    <property type="evidence" value="ECO:0007669"/>
    <property type="project" value="UniProtKB-UniRule"/>
</dbReference>
<dbReference type="GO" id="GO:0045259">
    <property type="term" value="C:proton-transporting ATP synthase complex"/>
    <property type="evidence" value="ECO:0007669"/>
    <property type="project" value="UniProtKB-KW"/>
</dbReference>
<dbReference type="GO" id="GO:0046933">
    <property type="term" value="F:proton-transporting ATP synthase activity, rotational mechanism"/>
    <property type="evidence" value="ECO:0007669"/>
    <property type="project" value="UniProtKB-UniRule"/>
</dbReference>
<dbReference type="CDD" id="cd00310">
    <property type="entry name" value="ATP-synt_Fo_a_6"/>
    <property type="match status" value="1"/>
</dbReference>
<dbReference type="FunFam" id="1.20.120.220:FF:000001">
    <property type="entry name" value="ATP synthase subunit a, chloroplastic"/>
    <property type="match status" value="1"/>
</dbReference>
<dbReference type="Gene3D" id="1.20.120.220">
    <property type="entry name" value="ATP synthase, F0 complex, subunit A"/>
    <property type="match status" value="1"/>
</dbReference>
<dbReference type="HAMAP" id="MF_01393">
    <property type="entry name" value="ATP_synth_a_bact"/>
    <property type="match status" value="1"/>
</dbReference>
<dbReference type="InterPro" id="IPR045082">
    <property type="entry name" value="ATP_syn_F0_a_bact/chloroplast"/>
</dbReference>
<dbReference type="InterPro" id="IPR000568">
    <property type="entry name" value="ATP_synth_F0_asu"/>
</dbReference>
<dbReference type="InterPro" id="IPR023011">
    <property type="entry name" value="ATP_synth_F0_asu_AS"/>
</dbReference>
<dbReference type="InterPro" id="IPR035908">
    <property type="entry name" value="F0_ATP_A_sf"/>
</dbReference>
<dbReference type="NCBIfam" id="TIGR01131">
    <property type="entry name" value="ATP_synt_6_or_A"/>
    <property type="match status" value="1"/>
</dbReference>
<dbReference type="PANTHER" id="PTHR42823">
    <property type="entry name" value="ATP SYNTHASE SUBUNIT A, CHLOROPLASTIC"/>
    <property type="match status" value="1"/>
</dbReference>
<dbReference type="PANTHER" id="PTHR42823:SF3">
    <property type="entry name" value="ATP SYNTHASE SUBUNIT A, CHLOROPLASTIC"/>
    <property type="match status" value="1"/>
</dbReference>
<dbReference type="Pfam" id="PF00119">
    <property type="entry name" value="ATP-synt_A"/>
    <property type="match status" value="1"/>
</dbReference>
<dbReference type="PRINTS" id="PR00123">
    <property type="entry name" value="ATPASEA"/>
</dbReference>
<dbReference type="SUPFAM" id="SSF81336">
    <property type="entry name" value="F1F0 ATP synthase subunit A"/>
    <property type="match status" value="1"/>
</dbReference>
<dbReference type="PROSITE" id="PS00449">
    <property type="entry name" value="ATPASE_A"/>
    <property type="match status" value="1"/>
</dbReference>
<feature type="chain" id="PRO_0000002597" description="ATP synthase subunit a, chloroplastic">
    <location>
        <begin position="1"/>
        <end position="248"/>
    </location>
</feature>
<feature type="transmembrane region" description="Helical" evidence="1">
    <location>
        <begin position="38"/>
        <end position="58"/>
    </location>
</feature>
<feature type="transmembrane region" description="Helical" evidence="1">
    <location>
        <begin position="96"/>
        <end position="116"/>
    </location>
</feature>
<feature type="transmembrane region" description="Helical" evidence="1">
    <location>
        <begin position="135"/>
        <end position="155"/>
    </location>
</feature>
<feature type="transmembrane region" description="Helical" evidence="1">
    <location>
        <begin position="200"/>
        <end position="220"/>
    </location>
</feature>
<feature type="transmembrane region" description="Helical" evidence="1">
    <location>
        <begin position="221"/>
        <end position="241"/>
    </location>
</feature>